<accession>Q87B73</accession>
<protein>
    <recommendedName>
        <fullName evidence="1">Small ribosomal subunit biogenesis GTPase RsgA</fullName>
        <ecNumber evidence="1">3.6.1.-</ecNumber>
    </recommendedName>
</protein>
<comment type="function">
    <text evidence="1">One of several proteins that assist in the late maturation steps of the functional core of the 30S ribosomal subunit. Helps release RbfA from mature subunits. May play a role in the assembly of ribosomal proteins into the subunit. Circularly permuted GTPase that catalyzes slow GTP hydrolysis, GTPase activity is stimulated by the 30S ribosomal subunit.</text>
</comment>
<comment type="cofactor">
    <cofactor evidence="1">
        <name>Zn(2+)</name>
        <dbReference type="ChEBI" id="CHEBI:29105"/>
    </cofactor>
    <text evidence="1">Binds 1 zinc ion per subunit.</text>
</comment>
<comment type="subunit">
    <text evidence="1">Monomer. Associates with 30S ribosomal subunit, binds 16S rRNA.</text>
</comment>
<comment type="subcellular location">
    <subcellularLocation>
        <location evidence="1">Cytoplasm</location>
    </subcellularLocation>
</comment>
<comment type="similarity">
    <text evidence="1">Belongs to the TRAFAC class YlqF/YawG GTPase family. RsgA subfamily.</text>
</comment>
<reference key="1">
    <citation type="journal article" date="2003" name="J. Bacteriol.">
        <title>Comparative analyses of the complete genome sequences of Pierce's disease and citrus variegated chlorosis strains of Xylella fastidiosa.</title>
        <authorList>
            <person name="Van Sluys M.A."/>
            <person name="de Oliveira M.C."/>
            <person name="Monteiro-Vitorello C.B."/>
            <person name="Miyaki C.Y."/>
            <person name="Furlan L.R."/>
            <person name="Camargo L.E.A."/>
            <person name="da Silva A.C.R."/>
            <person name="Moon D.H."/>
            <person name="Takita M.A."/>
            <person name="Lemos E.G.M."/>
            <person name="Machado M.A."/>
            <person name="Ferro M.I.T."/>
            <person name="da Silva F.R."/>
            <person name="Goldman M.H.S."/>
            <person name="Goldman G.H."/>
            <person name="Lemos M.V.F."/>
            <person name="El-Dorry H."/>
            <person name="Tsai S.M."/>
            <person name="Carrer H."/>
            <person name="Carraro D.M."/>
            <person name="de Oliveira R.C."/>
            <person name="Nunes L.R."/>
            <person name="Siqueira W.J."/>
            <person name="Coutinho L.L."/>
            <person name="Kimura E.T."/>
            <person name="Ferro E.S."/>
            <person name="Harakava R."/>
            <person name="Kuramae E.E."/>
            <person name="Marino C.L."/>
            <person name="Giglioti E."/>
            <person name="Abreu I.L."/>
            <person name="Alves L.M.C."/>
            <person name="do Amaral A.M."/>
            <person name="Baia G.S."/>
            <person name="Blanco S.R."/>
            <person name="Brito M.S."/>
            <person name="Cannavan F.S."/>
            <person name="Celestino A.V."/>
            <person name="da Cunha A.F."/>
            <person name="Fenille R.C."/>
            <person name="Ferro J.A."/>
            <person name="Formighieri E.F."/>
            <person name="Kishi L.T."/>
            <person name="Leoni S.G."/>
            <person name="Oliveira A.R."/>
            <person name="Rosa V.E. Jr."/>
            <person name="Sassaki F.T."/>
            <person name="Sena J.A.D."/>
            <person name="de Souza A.A."/>
            <person name="Truffi D."/>
            <person name="Tsukumo F."/>
            <person name="Yanai G.M."/>
            <person name="Zaros L.G."/>
            <person name="Civerolo E.L."/>
            <person name="Simpson A.J.G."/>
            <person name="Almeida N.F. Jr."/>
            <person name="Setubal J.C."/>
            <person name="Kitajima J.P."/>
        </authorList>
    </citation>
    <scope>NUCLEOTIDE SEQUENCE [LARGE SCALE GENOMIC DNA]</scope>
    <source>
        <strain>Temecula1 / ATCC 700964</strain>
    </source>
</reference>
<name>RSGA_XYLFT</name>
<gene>
    <name evidence="1" type="primary">rsgA</name>
    <name type="ordered locus">PD_1585</name>
</gene>
<evidence type="ECO:0000255" key="1">
    <source>
        <dbReference type="HAMAP-Rule" id="MF_01820"/>
    </source>
</evidence>
<evidence type="ECO:0000255" key="2">
    <source>
        <dbReference type="PROSITE-ProRule" id="PRU01058"/>
    </source>
</evidence>
<feature type="chain" id="PRO_0000171549" description="Small ribosomal subunit biogenesis GTPase RsgA">
    <location>
        <begin position="1"/>
        <end position="341"/>
    </location>
</feature>
<feature type="domain" description="CP-type G" evidence="2">
    <location>
        <begin position="112"/>
        <end position="268"/>
    </location>
</feature>
<feature type="binding site" evidence="1">
    <location>
        <begin position="157"/>
        <end position="160"/>
    </location>
    <ligand>
        <name>GTP</name>
        <dbReference type="ChEBI" id="CHEBI:37565"/>
    </ligand>
</feature>
<feature type="binding site" evidence="1">
    <location>
        <begin position="210"/>
        <end position="218"/>
    </location>
    <ligand>
        <name>GTP</name>
        <dbReference type="ChEBI" id="CHEBI:37565"/>
    </ligand>
</feature>
<feature type="binding site" evidence="1">
    <location>
        <position position="290"/>
    </location>
    <ligand>
        <name>Zn(2+)</name>
        <dbReference type="ChEBI" id="CHEBI:29105"/>
    </ligand>
</feature>
<feature type="binding site" evidence="1">
    <location>
        <position position="295"/>
    </location>
    <ligand>
        <name>Zn(2+)</name>
        <dbReference type="ChEBI" id="CHEBI:29105"/>
    </ligand>
</feature>
<feature type="binding site" evidence="1">
    <location>
        <position position="297"/>
    </location>
    <ligand>
        <name>Zn(2+)</name>
        <dbReference type="ChEBI" id="CHEBI:29105"/>
    </ligand>
</feature>
<feature type="binding site" evidence="1">
    <location>
        <position position="303"/>
    </location>
    <ligand>
        <name>Zn(2+)</name>
        <dbReference type="ChEBI" id="CHEBI:29105"/>
    </ligand>
</feature>
<dbReference type="EC" id="3.6.1.-" evidence="1"/>
<dbReference type="EMBL" id="AE009442">
    <property type="protein sequence ID" value="AAO29427.1"/>
    <property type="molecule type" value="Genomic_DNA"/>
</dbReference>
<dbReference type="RefSeq" id="WP_011098172.1">
    <property type="nucleotide sequence ID" value="NC_004556.1"/>
</dbReference>
<dbReference type="SMR" id="Q87B73"/>
<dbReference type="GeneID" id="93905412"/>
<dbReference type="KEGG" id="xft:PD_1585"/>
<dbReference type="HOGENOM" id="CLU_033617_0_1_6"/>
<dbReference type="Proteomes" id="UP000002516">
    <property type="component" value="Chromosome"/>
</dbReference>
<dbReference type="GO" id="GO:0005737">
    <property type="term" value="C:cytoplasm"/>
    <property type="evidence" value="ECO:0007669"/>
    <property type="project" value="UniProtKB-SubCell"/>
</dbReference>
<dbReference type="GO" id="GO:0005525">
    <property type="term" value="F:GTP binding"/>
    <property type="evidence" value="ECO:0007669"/>
    <property type="project" value="UniProtKB-UniRule"/>
</dbReference>
<dbReference type="GO" id="GO:0003924">
    <property type="term" value="F:GTPase activity"/>
    <property type="evidence" value="ECO:0007669"/>
    <property type="project" value="UniProtKB-UniRule"/>
</dbReference>
<dbReference type="GO" id="GO:0046872">
    <property type="term" value="F:metal ion binding"/>
    <property type="evidence" value="ECO:0007669"/>
    <property type="project" value="UniProtKB-KW"/>
</dbReference>
<dbReference type="GO" id="GO:0019843">
    <property type="term" value="F:rRNA binding"/>
    <property type="evidence" value="ECO:0007669"/>
    <property type="project" value="UniProtKB-KW"/>
</dbReference>
<dbReference type="GO" id="GO:0042274">
    <property type="term" value="P:ribosomal small subunit biogenesis"/>
    <property type="evidence" value="ECO:0007669"/>
    <property type="project" value="UniProtKB-UniRule"/>
</dbReference>
<dbReference type="CDD" id="cd01854">
    <property type="entry name" value="YjeQ_EngC"/>
    <property type="match status" value="1"/>
</dbReference>
<dbReference type="Gene3D" id="3.40.50.300">
    <property type="entry name" value="P-loop containing nucleotide triphosphate hydrolases"/>
    <property type="match status" value="1"/>
</dbReference>
<dbReference type="Gene3D" id="1.10.40.50">
    <property type="entry name" value="Probable gtpase engc, domain 3"/>
    <property type="match status" value="1"/>
</dbReference>
<dbReference type="HAMAP" id="MF_01820">
    <property type="entry name" value="GTPase_RsgA"/>
    <property type="match status" value="1"/>
</dbReference>
<dbReference type="InterPro" id="IPR030378">
    <property type="entry name" value="G_CP_dom"/>
</dbReference>
<dbReference type="InterPro" id="IPR027417">
    <property type="entry name" value="P-loop_NTPase"/>
</dbReference>
<dbReference type="InterPro" id="IPR004881">
    <property type="entry name" value="Ribosome_biogen_GTPase_RsgA"/>
</dbReference>
<dbReference type="InterPro" id="IPR010914">
    <property type="entry name" value="RsgA_GTPase_dom"/>
</dbReference>
<dbReference type="NCBIfam" id="TIGR00157">
    <property type="entry name" value="ribosome small subunit-dependent GTPase A"/>
    <property type="match status" value="1"/>
</dbReference>
<dbReference type="PANTHER" id="PTHR32120">
    <property type="entry name" value="SMALL RIBOSOMAL SUBUNIT BIOGENESIS GTPASE RSGA"/>
    <property type="match status" value="1"/>
</dbReference>
<dbReference type="PANTHER" id="PTHR32120:SF10">
    <property type="entry name" value="SMALL RIBOSOMAL SUBUNIT BIOGENESIS GTPASE RSGA"/>
    <property type="match status" value="1"/>
</dbReference>
<dbReference type="Pfam" id="PF03193">
    <property type="entry name" value="RsgA_GTPase"/>
    <property type="match status" value="1"/>
</dbReference>
<dbReference type="SUPFAM" id="SSF52540">
    <property type="entry name" value="P-loop containing nucleoside triphosphate hydrolases"/>
    <property type="match status" value="1"/>
</dbReference>
<dbReference type="PROSITE" id="PS50936">
    <property type="entry name" value="ENGC_GTPASE"/>
    <property type="match status" value="1"/>
</dbReference>
<dbReference type="PROSITE" id="PS51721">
    <property type="entry name" value="G_CP"/>
    <property type="match status" value="1"/>
</dbReference>
<proteinExistence type="inferred from homology"/>
<keyword id="KW-0963">Cytoplasm</keyword>
<keyword id="KW-0342">GTP-binding</keyword>
<keyword id="KW-0378">Hydrolase</keyword>
<keyword id="KW-0479">Metal-binding</keyword>
<keyword id="KW-0547">Nucleotide-binding</keyword>
<keyword id="KW-1185">Reference proteome</keyword>
<keyword id="KW-0690">Ribosome biogenesis</keyword>
<keyword id="KW-0694">RNA-binding</keyword>
<keyword id="KW-0699">rRNA-binding</keyword>
<keyword id="KW-0862">Zinc</keyword>
<sequence>MIEPVVGYRMLQAIGWPWPGPPADSAWQAMCAMYSQCRPARVIEQHRSGYVVAEAPEVPIKVESLPAWQRRSFPPHERAVVGDWVLLDGRRIVALLPRRTVIKRLAAGEHYRQQLIAANLDTAFIVCGLDGDFNPRRIERYCVLIASGGVEPVVVLTKVDLCVDVAAAVAVLREHSSQALAVVAVDARKAEPVVALYPWLLPGRTVALLGSSGAGKSTLTNTLLGEQRMKVGEVRQRDSRGRHTTTHRALLPLPSGACLIDTPGMRELKFTGEEDLVEEFADIELLATQCRFRDCAHQAEPGCAVRAAIGCGTLDPQRLHHYFKLRGEIVGAADRSMLRRY</sequence>
<organism>
    <name type="scientific">Xylella fastidiosa (strain Temecula1 / ATCC 700964)</name>
    <dbReference type="NCBI Taxonomy" id="183190"/>
    <lineage>
        <taxon>Bacteria</taxon>
        <taxon>Pseudomonadati</taxon>
        <taxon>Pseudomonadota</taxon>
        <taxon>Gammaproteobacteria</taxon>
        <taxon>Lysobacterales</taxon>
        <taxon>Lysobacteraceae</taxon>
        <taxon>Xylella</taxon>
    </lineage>
</organism>